<reference evidence="9 10" key="1">
    <citation type="journal article" date="1996" name="Proc. Natl. Acad. Sci. U.S.A.">
        <title>The C-terminal domain of the largest subunit of RNA polymerase II interacts with a novel set of serine/arginine-rich proteins.</title>
        <authorList>
            <person name="Yuryev A."/>
            <person name="Patturajan M."/>
            <person name="Litingtung Y."/>
            <person name="Joshi R.V."/>
            <person name="Gentile C."/>
            <person name="Gebara M."/>
            <person name="Corden J.L."/>
        </authorList>
    </citation>
    <scope>NUCLEOTIDE SEQUENCE [MRNA] (ISOFORM 2)</scope>
    <scope>INTERACTION WITH POLR2A</scope>
    <source>
        <tissue evidence="10">Hippocampus</tissue>
    </source>
</reference>
<reference evidence="9" key="2">
    <citation type="journal article" date="2004" name="Nature">
        <title>Genome sequence of the Brown Norway rat yields insights into mammalian evolution.</title>
        <authorList>
            <person name="Gibbs R.A."/>
            <person name="Weinstock G.M."/>
            <person name="Metzker M.L."/>
            <person name="Muzny D.M."/>
            <person name="Sodergren E.J."/>
            <person name="Scherer S."/>
            <person name="Scott G."/>
            <person name="Steffen D."/>
            <person name="Worley K.C."/>
            <person name="Burch P.E."/>
            <person name="Okwuonu G."/>
            <person name="Hines S."/>
            <person name="Lewis L."/>
            <person name="Deramo C."/>
            <person name="Delgado O."/>
            <person name="Dugan-Rocha S."/>
            <person name="Miner G."/>
            <person name="Morgan M."/>
            <person name="Hawes A."/>
            <person name="Gill R."/>
            <person name="Holt R.A."/>
            <person name="Adams M.D."/>
            <person name="Amanatides P.G."/>
            <person name="Baden-Tillson H."/>
            <person name="Barnstead M."/>
            <person name="Chin S."/>
            <person name="Evans C.A."/>
            <person name="Ferriera S."/>
            <person name="Fosler C."/>
            <person name="Glodek A."/>
            <person name="Gu Z."/>
            <person name="Jennings D."/>
            <person name="Kraft C.L."/>
            <person name="Nguyen T."/>
            <person name="Pfannkoch C.M."/>
            <person name="Sitter C."/>
            <person name="Sutton G.G."/>
            <person name="Venter J.C."/>
            <person name="Woodage T."/>
            <person name="Smith D."/>
            <person name="Lee H.-M."/>
            <person name="Gustafson E."/>
            <person name="Cahill P."/>
            <person name="Kana A."/>
            <person name="Doucette-Stamm L."/>
            <person name="Weinstock K."/>
            <person name="Fechtel K."/>
            <person name="Weiss R.B."/>
            <person name="Dunn D.M."/>
            <person name="Green E.D."/>
            <person name="Blakesley R.W."/>
            <person name="Bouffard G.G."/>
            <person name="De Jong P.J."/>
            <person name="Osoegawa K."/>
            <person name="Zhu B."/>
            <person name="Marra M."/>
            <person name="Schein J."/>
            <person name="Bosdet I."/>
            <person name="Fjell C."/>
            <person name="Jones S."/>
            <person name="Krzywinski M."/>
            <person name="Mathewson C."/>
            <person name="Siddiqui A."/>
            <person name="Wye N."/>
            <person name="McPherson J."/>
            <person name="Zhao S."/>
            <person name="Fraser C.M."/>
            <person name="Shetty J."/>
            <person name="Shatsman S."/>
            <person name="Geer K."/>
            <person name="Chen Y."/>
            <person name="Abramzon S."/>
            <person name="Nierman W.C."/>
            <person name="Havlak P.H."/>
            <person name="Chen R."/>
            <person name="Durbin K.J."/>
            <person name="Egan A."/>
            <person name="Ren Y."/>
            <person name="Song X.-Z."/>
            <person name="Li B."/>
            <person name="Liu Y."/>
            <person name="Qin X."/>
            <person name="Cawley S."/>
            <person name="Cooney A.J."/>
            <person name="D'Souza L.M."/>
            <person name="Martin K."/>
            <person name="Wu J.Q."/>
            <person name="Gonzalez-Garay M.L."/>
            <person name="Jackson A.R."/>
            <person name="Kalafus K.J."/>
            <person name="McLeod M.P."/>
            <person name="Milosavljevic A."/>
            <person name="Virk D."/>
            <person name="Volkov A."/>
            <person name="Wheeler D.A."/>
            <person name="Zhang Z."/>
            <person name="Bailey J.A."/>
            <person name="Eichler E.E."/>
            <person name="Tuzun E."/>
            <person name="Birney E."/>
            <person name="Mongin E."/>
            <person name="Ureta-Vidal A."/>
            <person name="Woodwark C."/>
            <person name="Zdobnov E."/>
            <person name="Bork P."/>
            <person name="Suyama M."/>
            <person name="Torrents D."/>
            <person name="Alexandersson M."/>
            <person name="Trask B.J."/>
            <person name="Young J.M."/>
            <person name="Huang H."/>
            <person name="Wang H."/>
            <person name="Xing H."/>
            <person name="Daniels S."/>
            <person name="Gietzen D."/>
            <person name="Schmidt J."/>
            <person name="Stevens K."/>
            <person name="Vitt U."/>
            <person name="Wingrove J."/>
            <person name="Camara F."/>
            <person name="Mar Alba M."/>
            <person name="Abril J.F."/>
            <person name="Guigo R."/>
            <person name="Smit A."/>
            <person name="Dubchak I."/>
            <person name="Rubin E.M."/>
            <person name="Couronne O."/>
            <person name="Poliakov A."/>
            <person name="Huebner N."/>
            <person name="Ganten D."/>
            <person name="Goesele C."/>
            <person name="Hummel O."/>
            <person name="Kreitler T."/>
            <person name="Lee Y.-A."/>
            <person name="Monti J."/>
            <person name="Schulz H."/>
            <person name="Zimdahl H."/>
            <person name="Himmelbauer H."/>
            <person name="Lehrach H."/>
            <person name="Jacob H.J."/>
            <person name="Bromberg S."/>
            <person name="Gullings-Handley J."/>
            <person name="Jensen-Seaman M.I."/>
            <person name="Kwitek A.E."/>
            <person name="Lazar J."/>
            <person name="Pasko D."/>
            <person name="Tonellato P.J."/>
            <person name="Twigger S."/>
            <person name="Ponting C.P."/>
            <person name="Duarte J.M."/>
            <person name="Rice S."/>
            <person name="Goodstadt L."/>
            <person name="Beatson S.A."/>
            <person name="Emes R.D."/>
            <person name="Winter E.E."/>
            <person name="Webber C."/>
            <person name="Brandt P."/>
            <person name="Nyakatura G."/>
            <person name="Adetobi M."/>
            <person name="Chiaromonte F."/>
            <person name="Elnitski L."/>
            <person name="Eswara P."/>
            <person name="Hardison R.C."/>
            <person name="Hou M."/>
            <person name="Kolbe D."/>
            <person name="Makova K."/>
            <person name="Miller W."/>
            <person name="Nekrutenko A."/>
            <person name="Riemer C."/>
            <person name="Schwartz S."/>
            <person name="Taylor J."/>
            <person name="Yang S."/>
            <person name="Zhang Y."/>
            <person name="Lindpaintner K."/>
            <person name="Andrews T.D."/>
            <person name="Caccamo M."/>
            <person name="Clamp M."/>
            <person name="Clarke L."/>
            <person name="Curwen V."/>
            <person name="Durbin R.M."/>
            <person name="Eyras E."/>
            <person name="Searle S.M."/>
            <person name="Cooper G.M."/>
            <person name="Batzoglou S."/>
            <person name="Brudno M."/>
            <person name="Sidow A."/>
            <person name="Stone E.A."/>
            <person name="Payseur B.A."/>
            <person name="Bourque G."/>
            <person name="Lopez-Otin C."/>
            <person name="Puente X.S."/>
            <person name="Chakrabarti K."/>
            <person name="Chatterji S."/>
            <person name="Dewey C."/>
            <person name="Pachter L."/>
            <person name="Bray N."/>
            <person name="Yap V.B."/>
            <person name="Caspi A."/>
            <person name="Tesler G."/>
            <person name="Pevzner P.A."/>
            <person name="Haussler D."/>
            <person name="Roskin K.M."/>
            <person name="Baertsch R."/>
            <person name="Clawson H."/>
            <person name="Furey T.S."/>
            <person name="Hinrichs A.S."/>
            <person name="Karolchik D."/>
            <person name="Kent W.J."/>
            <person name="Rosenbloom K.R."/>
            <person name="Trumbower H."/>
            <person name="Weirauch M."/>
            <person name="Cooper D.N."/>
            <person name="Stenson P.D."/>
            <person name="Ma B."/>
            <person name="Brent M."/>
            <person name="Arumugam M."/>
            <person name="Shteynberg D."/>
            <person name="Copley R.R."/>
            <person name="Taylor M.S."/>
            <person name="Riethman H."/>
            <person name="Mudunuri U."/>
            <person name="Peterson J."/>
            <person name="Guyer M."/>
            <person name="Felsenfeld A."/>
            <person name="Old S."/>
            <person name="Mockrin S."/>
            <person name="Collins F.S."/>
        </authorList>
    </citation>
    <scope>NUCLEOTIDE SEQUENCE [LARGE SCALE GENOMIC DNA]</scope>
    <source>
        <strain evidence="6">Brown Norway</strain>
    </source>
</reference>
<reference key="3">
    <citation type="journal article" date="2012" name="Nat. Commun.">
        <title>Quantitative maps of protein phosphorylation sites across 14 different rat organs and tissues.</title>
        <authorList>
            <person name="Lundby A."/>
            <person name="Secher A."/>
            <person name="Lage K."/>
            <person name="Nordsborg N.B."/>
            <person name="Dmytriyev A."/>
            <person name="Lundby C."/>
            <person name="Olsen J.V."/>
        </authorList>
    </citation>
    <scope>PHOSPHORYLATION [LARGE SCALE ANALYSIS] AT SER-450; SER-460; SER-870; SER-922 AND SER-1205</scope>
    <scope>IDENTIFICATION BY MASS SPECTROMETRY [LARGE SCALE ANALYSIS]</scope>
</reference>
<protein>
    <recommendedName>
        <fullName evidence="1">PHD and RING finger domain-containing protein 1</fullName>
    </recommendedName>
    <alternativeName>
        <fullName evidence="8">CTD-binding SR-like protein rA9</fullName>
    </alternativeName>
</protein>
<comment type="subunit">
    <text evidence="7">Interacts with POLR2A (via the C-terminal domain).</text>
</comment>
<comment type="alternative products">
    <event type="alternative splicing"/>
    <isoform>
        <id>Q63625-1</id>
        <name evidence="9">1</name>
        <sequence type="displayed"/>
    </isoform>
    <isoform>
        <id>Q63625-2</id>
        <name evidence="7">2</name>
        <sequence type="described" ref="VSP_052981 VSP_052982"/>
    </isoform>
</comment>
<feature type="chain" id="PRO_0000354663" description="PHD and RING finger domain-containing protein 1">
    <location>
        <begin position="1"/>
        <end position="1685"/>
    </location>
</feature>
<feature type="zinc finger region" description="RING-type; degenerate" evidence="4">
    <location>
        <begin position="109"/>
        <end position="150"/>
    </location>
</feature>
<feature type="zinc finger region" description="PHD-type" evidence="3">
    <location>
        <begin position="188"/>
        <end position="238"/>
    </location>
</feature>
<feature type="region of interest" description="Disordered" evidence="5">
    <location>
        <begin position="1"/>
        <end position="82"/>
    </location>
</feature>
<feature type="region of interest" description="Disordered" evidence="5">
    <location>
        <begin position="333"/>
        <end position="390"/>
    </location>
</feature>
<feature type="region of interest" description="Disordered" evidence="5">
    <location>
        <begin position="449"/>
        <end position="483"/>
    </location>
</feature>
<feature type="region of interest" description="Disordered" evidence="5">
    <location>
        <begin position="537"/>
        <end position="590"/>
    </location>
</feature>
<feature type="region of interest" description="Disordered" evidence="5">
    <location>
        <begin position="606"/>
        <end position="777"/>
    </location>
</feature>
<feature type="region of interest" description="Disordered" evidence="5">
    <location>
        <begin position="809"/>
        <end position="860"/>
    </location>
</feature>
<feature type="region of interest" description="Disordered" evidence="5">
    <location>
        <begin position="892"/>
        <end position="1229"/>
    </location>
</feature>
<feature type="region of interest" description="Disordered" evidence="5">
    <location>
        <begin position="1290"/>
        <end position="1355"/>
    </location>
</feature>
<feature type="region of interest" description="Disordered" evidence="5">
    <location>
        <begin position="1369"/>
        <end position="1390"/>
    </location>
</feature>
<feature type="region of interest" description="Disordered" evidence="5">
    <location>
        <begin position="1421"/>
        <end position="1448"/>
    </location>
</feature>
<feature type="region of interest" description="Disordered" evidence="5">
    <location>
        <begin position="1466"/>
        <end position="1501"/>
    </location>
</feature>
<feature type="region of interest" description="Disordered" evidence="5">
    <location>
        <begin position="1569"/>
        <end position="1591"/>
    </location>
</feature>
<feature type="coiled-coil region" evidence="2">
    <location>
        <begin position="1589"/>
        <end position="1615"/>
    </location>
</feature>
<feature type="compositionally biased region" description="Acidic residues" evidence="5">
    <location>
        <begin position="41"/>
        <end position="81"/>
    </location>
</feature>
<feature type="compositionally biased region" description="Basic residues" evidence="5">
    <location>
        <begin position="339"/>
        <end position="364"/>
    </location>
</feature>
<feature type="compositionally biased region" description="Basic residues" evidence="5">
    <location>
        <begin position="372"/>
        <end position="387"/>
    </location>
</feature>
<feature type="compositionally biased region" description="Polar residues" evidence="5">
    <location>
        <begin position="606"/>
        <end position="625"/>
    </location>
</feature>
<feature type="compositionally biased region" description="Polar residues" evidence="5">
    <location>
        <begin position="637"/>
        <end position="662"/>
    </location>
</feature>
<feature type="compositionally biased region" description="Basic and acidic residues" evidence="5">
    <location>
        <begin position="671"/>
        <end position="682"/>
    </location>
</feature>
<feature type="compositionally biased region" description="Polar residues" evidence="5">
    <location>
        <begin position="694"/>
        <end position="709"/>
    </location>
</feature>
<feature type="compositionally biased region" description="Polar residues" evidence="5">
    <location>
        <begin position="737"/>
        <end position="751"/>
    </location>
</feature>
<feature type="compositionally biased region" description="Low complexity" evidence="5">
    <location>
        <begin position="835"/>
        <end position="860"/>
    </location>
</feature>
<feature type="compositionally biased region" description="Acidic residues" evidence="5">
    <location>
        <begin position="922"/>
        <end position="934"/>
    </location>
</feature>
<feature type="compositionally biased region" description="Low complexity" evidence="5">
    <location>
        <begin position="1001"/>
        <end position="1010"/>
    </location>
</feature>
<feature type="compositionally biased region" description="Basic residues" evidence="5">
    <location>
        <begin position="1011"/>
        <end position="1031"/>
    </location>
</feature>
<feature type="compositionally biased region" description="Basic residues" evidence="5">
    <location>
        <begin position="1054"/>
        <end position="1064"/>
    </location>
</feature>
<feature type="compositionally biased region" description="Basic and acidic residues" evidence="5">
    <location>
        <begin position="1065"/>
        <end position="1075"/>
    </location>
</feature>
<feature type="compositionally biased region" description="Basic residues" evidence="5">
    <location>
        <begin position="1089"/>
        <end position="1102"/>
    </location>
</feature>
<feature type="compositionally biased region" description="Basic residues" evidence="5">
    <location>
        <begin position="1117"/>
        <end position="1129"/>
    </location>
</feature>
<feature type="compositionally biased region" description="Basic and acidic residues" evidence="5">
    <location>
        <begin position="1130"/>
        <end position="1143"/>
    </location>
</feature>
<feature type="compositionally biased region" description="Basic and acidic residues" evidence="5">
    <location>
        <begin position="1151"/>
        <end position="1165"/>
    </location>
</feature>
<feature type="compositionally biased region" description="Basic residues" evidence="5">
    <location>
        <begin position="1181"/>
        <end position="1191"/>
    </location>
</feature>
<feature type="compositionally biased region" description="Basic and acidic residues" evidence="5">
    <location>
        <begin position="1192"/>
        <end position="1201"/>
    </location>
</feature>
<feature type="compositionally biased region" description="Low complexity" evidence="5">
    <location>
        <begin position="1292"/>
        <end position="1305"/>
    </location>
</feature>
<feature type="compositionally biased region" description="Basic and acidic residues" evidence="5">
    <location>
        <begin position="1577"/>
        <end position="1591"/>
    </location>
</feature>
<feature type="modified residue" description="Phosphothreonine" evidence="1">
    <location>
        <position position="335"/>
    </location>
</feature>
<feature type="modified residue" description="Phosphoserine" evidence="11">
    <location>
        <position position="450"/>
    </location>
</feature>
<feature type="modified residue" description="Phosphoserine" evidence="11">
    <location>
        <position position="460"/>
    </location>
</feature>
<feature type="modified residue" description="Phosphoserine" evidence="1">
    <location>
        <position position="817"/>
    </location>
</feature>
<feature type="modified residue" description="Phosphoserine" evidence="1">
    <location>
        <position position="848"/>
    </location>
</feature>
<feature type="modified residue" description="Phosphoserine" evidence="1">
    <location>
        <position position="849"/>
    </location>
</feature>
<feature type="modified residue" description="Phosphoserine" evidence="1">
    <location>
        <position position="867"/>
    </location>
</feature>
<feature type="modified residue" description="Phosphoserine" evidence="11">
    <location>
        <position position="870"/>
    </location>
</feature>
<feature type="modified residue" description="Phosphoserine" evidence="11">
    <location>
        <position position="922"/>
    </location>
</feature>
<feature type="modified residue" description="Phosphoserine" evidence="1">
    <location>
        <position position="948"/>
    </location>
</feature>
<feature type="modified residue" description="Phosphoserine" evidence="1">
    <location>
        <position position="984"/>
    </location>
</feature>
<feature type="modified residue" description="Phosphoserine" evidence="1">
    <location>
        <position position="1002"/>
    </location>
</feature>
<feature type="modified residue" description="Phosphoserine" evidence="1">
    <location>
        <position position="1135"/>
    </location>
</feature>
<feature type="modified residue" description="Phosphoserine" evidence="1">
    <location>
        <position position="1139"/>
    </location>
</feature>
<feature type="modified residue" description="Phosphoserine" evidence="11">
    <location>
        <position position="1205"/>
    </location>
</feature>
<feature type="modified residue" description="Phosphoserine" evidence="1">
    <location>
        <position position="1372"/>
    </location>
</feature>
<feature type="modified residue" description="Phosphoserine" evidence="1">
    <location>
        <position position="1383"/>
    </location>
</feature>
<feature type="modified residue" description="Phosphothreonine" evidence="1">
    <location>
        <position position="1416"/>
    </location>
</feature>
<feature type="splice variant" id="VSP_052981" description="In isoform 2." evidence="8">
    <location>
        <begin position="1"/>
        <end position="212"/>
    </location>
</feature>
<feature type="splice variant" id="VSP_052982" description="In isoform 2." evidence="8">
    <original>YHMECLDPPLQEVPVDEWFCPECAVPGVDPTH</original>
    <variation>MRRLKRKTRPFVKCVAGVIVRTGSYFVTAVML</variation>
    <location>
        <begin position="213"/>
        <end position="244"/>
    </location>
</feature>
<feature type="sequence conflict" description="In Ref. 1; AAC52658." evidence="9" ref="1">
    <original>T</original>
    <variation>S</variation>
    <location>
        <position position="615"/>
    </location>
</feature>
<feature type="sequence conflict" description="In Ref. 1; AAC52658." evidence="9" ref="1">
    <original>Q</original>
    <variation>P</variation>
    <location>
        <position position="793"/>
    </location>
</feature>
<feature type="sequence conflict" description="In Ref. 1; AAC52658." evidence="9" ref="1">
    <original>SG</original>
    <variation>PD</variation>
    <location>
        <begin position="855"/>
        <end position="856"/>
    </location>
</feature>
<feature type="sequence conflict" description="In Ref. 1; AAC52658." evidence="9" ref="1">
    <original>S</original>
    <variation>G</variation>
    <location>
        <position position="1549"/>
    </location>
</feature>
<feature type="sequence conflict" description="In Ref. 1; AAC52658." evidence="9" ref="1">
    <original>K</original>
    <variation>T</variation>
    <location>
        <position position="1592"/>
    </location>
</feature>
<accession>Q63625</accession>
<gene>
    <name evidence="1" type="primary">Phrf1</name>
</gene>
<proteinExistence type="evidence at protein level"/>
<dbReference type="EMBL" id="U49057">
    <property type="protein sequence ID" value="AAC52658.1"/>
    <property type="molecule type" value="mRNA"/>
</dbReference>
<dbReference type="EMBL" id="AC118351">
    <property type="status" value="NOT_ANNOTATED_CDS"/>
    <property type="molecule type" value="Genomic_DNA"/>
</dbReference>
<dbReference type="PIR" id="T31422">
    <property type="entry name" value="T31422"/>
</dbReference>
<dbReference type="RefSeq" id="NP_620793.1">
    <property type="nucleotide sequence ID" value="NM_139093.1"/>
</dbReference>
<dbReference type="RefSeq" id="XP_006230576.1">
    <molecule id="Q63625-1"/>
    <property type="nucleotide sequence ID" value="XM_006230514.5"/>
</dbReference>
<dbReference type="RefSeq" id="XP_063136873.1">
    <molecule id="Q63625-1"/>
    <property type="nucleotide sequence ID" value="XM_063280803.1"/>
</dbReference>
<dbReference type="SMR" id="Q63625"/>
<dbReference type="FunCoup" id="Q63625">
    <property type="interactions" value="3418"/>
</dbReference>
<dbReference type="STRING" id="10116.ENSRNOP00000046880"/>
<dbReference type="iPTMnet" id="Q63625"/>
<dbReference type="PhosphoSitePlus" id="Q63625"/>
<dbReference type="PaxDb" id="10116-ENSRNOP00000046880"/>
<dbReference type="Ensembl" id="ENSRNOT00000023376.5">
    <molecule id="Q63625-2"/>
    <property type="protein sequence ID" value="ENSRNOP00000023376.1"/>
    <property type="gene ID" value="ENSRNOG00000017299.8"/>
</dbReference>
<dbReference type="GeneID" id="245925"/>
<dbReference type="UCSC" id="RGD:708360">
    <molecule id="Q63625-1"/>
    <property type="organism name" value="rat"/>
</dbReference>
<dbReference type="AGR" id="RGD:708360"/>
<dbReference type="CTD" id="57661"/>
<dbReference type="RGD" id="708360">
    <property type="gene designation" value="Phrf1"/>
</dbReference>
<dbReference type="VEuPathDB" id="HostDB:ENSRNOG00000017299"/>
<dbReference type="eggNOG" id="KOG0825">
    <property type="taxonomic scope" value="Eukaryota"/>
</dbReference>
<dbReference type="GeneTree" id="ENSGT00950000183205"/>
<dbReference type="HOGENOM" id="CLU_003222_0_0_1"/>
<dbReference type="InParanoid" id="Q63625"/>
<dbReference type="PhylomeDB" id="Q63625"/>
<dbReference type="TreeFam" id="TF332183"/>
<dbReference type="PRO" id="PR:Q63625"/>
<dbReference type="Proteomes" id="UP000002494">
    <property type="component" value="Chromosome 1"/>
</dbReference>
<dbReference type="Bgee" id="ENSRNOG00000017299">
    <property type="expression patterns" value="Expressed in thymus and 19 other cell types or tissues"/>
</dbReference>
<dbReference type="GO" id="GO:0019904">
    <property type="term" value="F:protein domain specific binding"/>
    <property type="evidence" value="ECO:0000315"/>
    <property type="project" value="RGD"/>
</dbReference>
<dbReference type="GO" id="GO:0070063">
    <property type="term" value="F:RNA polymerase binding"/>
    <property type="evidence" value="ECO:0000353"/>
    <property type="project" value="UniProtKB"/>
</dbReference>
<dbReference type="GO" id="GO:0008270">
    <property type="term" value="F:zinc ion binding"/>
    <property type="evidence" value="ECO:0007669"/>
    <property type="project" value="UniProtKB-KW"/>
</dbReference>
<dbReference type="GO" id="GO:0006397">
    <property type="term" value="P:mRNA processing"/>
    <property type="evidence" value="ECO:0000315"/>
    <property type="project" value="RGD"/>
</dbReference>
<dbReference type="GO" id="GO:0006366">
    <property type="term" value="P:transcription by RNA polymerase II"/>
    <property type="evidence" value="ECO:0000315"/>
    <property type="project" value="RGD"/>
</dbReference>
<dbReference type="CDD" id="cd16635">
    <property type="entry name" value="mRING-HC-C3HC3D_PHRF1"/>
    <property type="match status" value="1"/>
</dbReference>
<dbReference type="CDD" id="cd15536">
    <property type="entry name" value="PHD_PHRF1"/>
    <property type="match status" value="1"/>
</dbReference>
<dbReference type="Gene3D" id="2.30.30.1150">
    <property type="match status" value="1"/>
</dbReference>
<dbReference type="Gene3D" id="3.30.40.10">
    <property type="entry name" value="Zinc/RING finger domain, C3HC4 (zinc finger)"/>
    <property type="match status" value="1"/>
</dbReference>
<dbReference type="InterPro" id="IPR047157">
    <property type="entry name" value="PHRF1/Atg35"/>
</dbReference>
<dbReference type="InterPro" id="IPR057031">
    <property type="entry name" value="SCAF11-like_C"/>
</dbReference>
<dbReference type="InterPro" id="IPR019786">
    <property type="entry name" value="Zinc_finger_PHD-type_CS"/>
</dbReference>
<dbReference type="InterPro" id="IPR011011">
    <property type="entry name" value="Znf_FYVE_PHD"/>
</dbReference>
<dbReference type="InterPro" id="IPR001965">
    <property type="entry name" value="Znf_PHD"/>
</dbReference>
<dbReference type="InterPro" id="IPR019787">
    <property type="entry name" value="Znf_PHD-finger"/>
</dbReference>
<dbReference type="InterPro" id="IPR001841">
    <property type="entry name" value="Znf_RING"/>
</dbReference>
<dbReference type="InterPro" id="IPR013083">
    <property type="entry name" value="Znf_RING/FYVE/PHD"/>
</dbReference>
<dbReference type="InterPro" id="IPR017907">
    <property type="entry name" value="Znf_RING_CS"/>
</dbReference>
<dbReference type="PANTHER" id="PTHR12618">
    <property type="entry name" value="PHD AND RING FINGER DOMAIN-CONTAINING PROTEIN 1"/>
    <property type="match status" value="1"/>
</dbReference>
<dbReference type="PANTHER" id="PTHR12618:SF20">
    <property type="entry name" value="PHD AND RING FINGER DOMAIN-CONTAINING PROTEIN 1"/>
    <property type="match status" value="1"/>
</dbReference>
<dbReference type="Pfam" id="PF00628">
    <property type="entry name" value="PHD"/>
    <property type="match status" value="1"/>
</dbReference>
<dbReference type="Pfam" id="PF23030">
    <property type="entry name" value="SCAF11-like_C"/>
    <property type="match status" value="1"/>
</dbReference>
<dbReference type="Pfam" id="PF13639">
    <property type="entry name" value="zf-RING_2"/>
    <property type="match status" value="1"/>
</dbReference>
<dbReference type="SMART" id="SM00249">
    <property type="entry name" value="PHD"/>
    <property type="match status" value="1"/>
</dbReference>
<dbReference type="SMART" id="SM00184">
    <property type="entry name" value="RING"/>
    <property type="match status" value="2"/>
</dbReference>
<dbReference type="SUPFAM" id="SSF57903">
    <property type="entry name" value="FYVE/PHD zinc finger"/>
    <property type="match status" value="1"/>
</dbReference>
<dbReference type="SUPFAM" id="SSF57850">
    <property type="entry name" value="RING/U-box"/>
    <property type="match status" value="1"/>
</dbReference>
<dbReference type="PROSITE" id="PS01359">
    <property type="entry name" value="ZF_PHD_1"/>
    <property type="match status" value="1"/>
</dbReference>
<dbReference type="PROSITE" id="PS50016">
    <property type="entry name" value="ZF_PHD_2"/>
    <property type="match status" value="1"/>
</dbReference>
<dbReference type="PROSITE" id="PS00518">
    <property type="entry name" value="ZF_RING_1"/>
    <property type="match status" value="1"/>
</dbReference>
<dbReference type="PROSITE" id="PS50089">
    <property type="entry name" value="ZF_RING_2"/>
    <property type="match status" value="1"/>
</dbReference>
<evidence type="ECO:0000250" key="1">
    <source>
        <dbReference type="UniProtKB" id="Q9P1Y6"/>
    </source>
</evidence>
<evidence type="ECO:0000255" key="2"/>
<evidence type="ECO:0000255" key="3">
    <source>
        <dbReference type="PROSITE-ProRule" id="PRU00146"/>
    </source>
</evidence>
<evidence type="ECO:0000255" key="4">
    <source>
        <dbReference type="PROSITE-ProRule" id="PRU00175"/>
    </source>
</evidence>
<evidence type="ECO:0000256" key="5">
    <source>
        <dbReference type="SAM" id="MobiDB-lite"/>
    </source>
</evidence>
<evidence type="ECO:0000269" key="6">
    <source>
    </source>
</evidence>
<evidence type="ECO:0000269" key="7">
    <source>
    </source>
</evidence>
<evidence type="ECO:0000303" key="8">
    <source>
    </source>
</evidence>
<evidence type="ECO:0000305" key="9"/>
<evidence type="ECO:0000312" key="10">
    <source>
        <dbReference type="EMBL" id="AAC52658.1"/>
    </source>
</evidence>
<evidence type="ECO:0007744" key="11">
    <source>
    </source>
</evidence>
<keyword id="KW-0025">Alternative splicing</keyword>
<keyword id="KW-0175">Coiled coil</keyword>
<keyword id="KW-0479">Metal-binding</keyword>
<keyword id="KW-0597">Phosphoprotein</keyword>
<keyword id="KW-1185">Reference proteome</keyword>
<keyword id="KW-0862">Zinc</keyword>
<keyword id="KW-0863">Zinc-finger</keyword>
<organism>
    <name type="scientific">Rattus norvegicus</name>
    <name type="common">Rat</name>
    <dbReference type="NCBI Taxonomy" id="10116"/>
    <lineage>
        <taxon>Eukaryota</taxon>
        <taxon>Metazoa</taxon>
        <taxon>Chordata</taxon>
        <taxon>Craniata</taxon>
        <taxon>Vertebrata</taxon>
        <taxon>Euteleostomi</taxon>
        <taxon>Mammalia</taxon>
        <taxon>Eutheria</taxon>
        <taxon>Euarchontoglires</taxon>
        <taxon>Glires</taxon>
        <taxon>Rodentia</taxon>
        <taxon>Myomorpha</taxon>
        <taxon>Muroidea</taxon>
        <taxon>Muridae</taxon>
        <taxon>Murinae</taxon>
        <taxon>Rattus</taxon>
    </lineage>
</organism>
<sequence>MDDDNLDELVAHSPGPDGPPQVGSSELASDAEESSNGHSEDSEDDTGSEQDDDTDGEETEGLSEEEDPEDRSGSEDSEDGIEVPTAAVETQRKLEASSTPNSDDDAESCPICLNAFRDQAVGTPETCAHYFCLDCIIEWSRNANSCPVDRTIFKCICIRAQFNGKILKKIPVENTRACEDEEAEEEDPTFCEVCGRSDREDRLLLCDGCDAGYHMECLDPPLQEVPVDEWFCPECAVPGVDPTHDAAPVSDEEVSLLLADVVPTTSRLRPRVGRTRAIARTRQSERVRATVNRNRISSARRVQHVPRYLMSSLLDETIEAVATGLSTAVYQRPLTPRVPAKRKRKAGRRKKVLGRKKTRSRSSVKSKSGGTRAKKRQHRVRRTKGRKLKNEVTARSRIARTLGLRRPVRGTSMPSVYKPVDPSLGLMRADIGAASLSLFGDPYALDPFDSNGEQSADPPSPLSAKRRVLSRSALQSHQPVARPVAMGLARRQLPAVAPEPSVEEAPVPDLLGSILCGQSLLMMSSADVVIHRDGSLSAKRAAPVSLQRNSVTQSREESRLRDNLQPGALPSESVSGGLIGDRRPNSGLSCGDRTALRCLPAQIVQTPVRSDSSVTPRSGLSGNLSDESRPKWKHSNSPRLNGSNVRVGSASTKTMTHSNFPSKNIAPGHPQKTDPRRPDFSKLPRIPKIRRDGSNSTQDQAPASGQTVELPSACISRLTGREGPGQPGRGRADSEPSSRGPQETGSHTSGSRPPAPSSHGNLAPLGPSRGKGIGSSFESFRINIPGNTAHCSQLSSPGFCNTFRPVDSKVQRKENPSPLFSIKKPKQLKSEIYDPFDPTGSDSSPPSSSPESLGSGLLPSEITRTISINSPKAPAFQTVRCVTSYRVESVFGTEMDPDPQPPGEPVSGMLELLGKGPAEGASDLEQEGLGEIEPTEIQGSSARAQRPSPPDPWDDEDGVSCTPFFGSEERTVTCVTVEEPSVPSPDAPQITTHRIVEFRASSRSRSTSSSRSRKKTKKKKKVAREHQRTRSSTRSGSRDRTSRSVSPFTEEHTKRHRAKTKSRRSSSDRASSQDRAKRRKDRDREHRRGPWGHGRCWRKSRSRSGSPGSSSCERHESRRRKRRHSGSRSRGRDGSPHSSLERDRRHKHRERSRERMDKKESMTRSRERRRWRSRSPSVEHRTRRPHSREKHPHSPEKKGAVREVSPAPAPQGEPRQDGDHSTKPPVSEVSVLPEVVSVLPEVVVADLNPPEVPPVLAESVSCVPEDLDYGDSVEAGHVFEDFSNEAIFIQLDDMSSPPSPESTDSSPERDFLPNPILPPASLPQNSTLPVTQREVLPIHSEDISKPAPQPLAPSDQCLLRQDTVETTATTLSTPGVLPMGKDSPLLSGRGCEVVRPKDAVAPAPLLRSRTLVKRVTWNLQEAEASTPALDRDPRTPLQRPQRPQEGDWDAEDRALIGFQQAPFSELPPPIHVLQESGLPDADPSQPPGVPRAEGPPAVGTLHSAGGILAQVYSPNMPPPLAQPSSIPPYALVNQPSVQLILQGTLPLASCGAAQNLAPVPTMPATASELAVPTTNNSEERTATPKTAAEKTKKEEYMKKLHMQERAVEEVKLAIKPFYQKREVTKEEYKDILRKAVQKICHSKSGEINPVKVANLVKAYVDKYRHMRKHKKTEAGEEPPTQGAET</sequence>
<name>PHRF1_RAT</name>